<proteinExistence type="inferred from homology"/>
<reference key="1">
    <citation type="journal article" date="2007" name="Microbiology">
        <title>Comparative analysis of the Corynebacterium glutamicum group and complete genome sequence of strain R.</title>
        <authorList>
            <person name="Yukawa H."/>
            <person name="Omumasaba C.A."/>
            <person name="Nonaka H."/>
            <person name="Kos P."/>
            <person name="Okai N."/>
            <person name="Suzuki N."/>
            <person name="Suda M."/>
            <person name="Tsuge Y."/>
            <person name="Watanabe J."/>
            <person name="Ikeda Y."/>
            <person name="Vertes A.A."/>
            <person name="Inui M."/>
        </authorList>
    </citation>
    <scope>NUCLEOTIDE SEQUENCE [LARGE SCALE GENOMIC DNA]</scope>
    <source>
        <strain>R</strain>
    </source>
</reference>
<comment type="function">
    <text evidence="1">Catalyzes the formation of 6,7-dimethyl-8-ribityllumazine by condensation of 5-amino-6-(D-ribitylamino)uracil with 3,4-dihydroxy-2-butanone 4-phosphate. This is the penultimate step in the biosynthesis of riboflavin.</text>
</comment>
<comment type="catalytic activity">
    <reaction evidence="1">
        <text>(2S)-2-hydroxy-3-oxobutyl phosphate + 5-amino-6-(D-ribitylamino)uracil = 6,7-dimethyl-8-(1-D-ribityl)lumazine + phosphate + 2 H2O + H(+)</text>
        <dbReference type="Rhea" id="RHEA:26152"/>
        <dbReference type="ChEBI" id="CHEBI:15377"/>
        <dbReference type="ChEBI" id="CHEBI:15378"/>
        <dbReference type="ChEBI" id="CHEBI:15934"/>
        <dbReference type="ChEBI" id="CHEBI:43474"/>
        <dbReference type="ChEBI" id="CHEBI:58201"/>
        <dbReference type="ChEBI" id="CHEBI:58830"/>
        <dbReference type="EC" id="2.5.1.78"/>
    </reaction>
</comment>
<comment type="pathway">
    <text evidence="1">Cofactor biosynthesis; riboflavin biosynthesis; riboflavin from 2-hydroxy-3-oxobutyl phosphate and 5-amino-6-(D-ribitylamino)uracil: step 1/2.</text>
</comment>
<comment type="similarity">
    <text evidence="1">Belongs to the DMRL synthase family.</text>
</comment>
<accession>A4QEG8</accession>
<keyword id="KW-0686">Riboflavin biosynthesis</keyword>
<keyword id="KW-0808">Transferase</keyword>
<organism>
    <name type="scientific">Corynebacterium glutamicum (strain R)</name>
    <dbReference type="NCBI Taxonomy" id="340322"/>
    <lineage>
        <taxon>Bacteria</taxon>
        <taxon>Bacillati</taxon>
        <taxon>Actinomycetota</taxon>
        <taxon>Actinomycetes</taxon>
        <taxon>Mycobacteriales</taxon>
        <taxon>Corynebacteriaceae</taxon>
        <taxon>Corynebacterium</taxon>
    </lineage>
</organism>
<gene>
    <name evidence="1" type="primary">ribH</name>
    <name type="ordered locus">cgR_1642</name>
</gene>
<sequence length="159" mass="16476">MAKEGLPAVELPDASGLKVAVVTARWNAEICDRLHKHAVDAGRAAGATVSEYRVIGALELPVVVQELARTHDAVVALGCVVRGGTPHFDYVCDSVTEGLTRIALDTSTPIGNGVLTTNTEEQAVERSGGEGSVEDKGAEAMVAALDTALVLSQIRATEG</sequence>
<evidence type="ECO:0000255" key="1">
    <source>
        <dbReference type="HAMAP-Rule" id="MF_00178"/>
    </source>
</evidence>
<name>RISB_CORGB</name>
<dbReference type="EC" id="2.5.1.78" evidence="1"/>
<dbReference type="EMBL" id="AP009044">
    <property type="protein sequence ID" value="BAF54634.1"/>
    <property type="molecule type" value="Genomic_DNA"/>
</dbReference>
<dbReference type="RefSeq" id="WP_003856018.1">
    <property type="nucleotide sequence ID" value="NC_009342.1"/>
</dbReference>
<dbReference type="SMR" id="A4QEG8"/>
<dbReference type="GeneID" id="1019562"/>
<dbReference type="KEGG" id="cgt:cgR_1642"/>
<dbReference type="HOGENOM" id="CLU_089358_1_2_11"/>
<dbReference type="PhylomeDB" id="A4QEG8"/>
<dbReference type="UniPathway" id="UPA00275">
    <property type="reaction ID" value="UER00404"/>
</dbReference>
<dbReference type="Proteomes" id="UP000006698">
    <property type="component" value="Chromosome"/>
</dbReference>
<dbReference type="GO" id="GO:0005829">
    <property type="term" value="C:cytosol"/>
    <property type="evidence" value="ECO:0007669"/>
    <property type="project" value="TreeGrafter"/>
</dbReference>
<dbReference type="GO" id="GO:0009349">
    <property type="term" value="C:riboflavin synthase complex"/>
    <property type="evidence" value="ECO:0007669"/>
    <property type="project" value="InterPro"/>
</dbReference>
<dbReference type="GO" id="GO:0000906">
    <property type="term" value="F:6,7-dimethyl-8-ribityllumazine synthase activity"/>
    <property type="evidence" value="ECO:0007669"/>
    <property type="project" value="UniProtKB-UniRule"/>
</dbReference>
<dbReference type="GO" id="GO:0009231">
    <property type="term" value="P:riboflavin biosynthetic process"/>
    <property type="evidence" value="ECO:0007669"/>
    <property type="project" value="UniProtKB-UniRule"/>
</dbReference>
<dbReference type="CDD" id="cd09209">
    <property type="entry name" value="Lumazine_synthase-I"/>
    <property type="match status" value="1"/>
</dbReference>
<dbReference type="Gene3D" id="3.40.50.960">
    <property type="entry name" value="Lumazine/riboflavin synthase"/>
    <property type="match status" value="1"/>
</dbReference>
<dbReference type="HAMAP" id="MF_00178">
    <property type="entry name" value="Lumazine_synth"/>
    <property type="match status" value="1"/>
</dbReference>
<dbReference type="InterPro" id="IPR034964">
    <property type="entry name" value="LS"/>
</dbReference>
<dbReference type="InterPro" id="IPR002180">
    <property type="entry name" value="LS/RS"/>
</dbReference>
<dbReference type="InterPro" id="IPR036467">
    <property type="entry name" value="LS/RS_sf"/>
</dbReference>
<dbReference type="NCBIfam" id="TIGR00114">
    <property type="entry name" value="lumazine-synth"/>
    <property type="match status" value="1"/>
</dbReference>
<dbReference type="PANTHER" id="PTHR21058:SF0">
    <property type="entry name" value="6,7-DIMETHYL-8-RIBITYLLUMAZINE SYNTHASE"/>
    <property type="match status" value="1"/>
</dbReference>
<dbReference type="PANTHER" id="PTHR21058">
    <property type="entry name" value="6,7-DIMETHYL-8-RIBITYLLUMAZINE SYNTHASE DMRL SYNTHASE LUMAZINE SYNTHASE"/>
    <property type="match status" value="1"/>
</dbReference>
<dbReference type="Pfam" id="PF00885">
    <property type="entry name" value="DMRL_synthase"/>
    <property type="match status" value="1"/>
</dbReference>
<dbReference type="SUPFAM" id="SSF52121">
    <property type="entry name" value="Lumazine synthase"/>
    <property type="match status" value="1"/>
</dbReference>
<protein>
    <recommendedName>
        <fullName evidence="1">6,7-dimethyl-8-ribityllumazine synthase</fullName>
        <shortName evidence="1">DMRL synthase</shortName>
        <shortName evidence="1">LS</shortName>
        <shortName evidence="1">Lumazine synthase</shortName>
        <ecNumber evidence="1">2.5.1.78</ecNumber>
    </recommendedName>
</protein>
<feature type="chain" id="PRO_1000040410" description="6,7-dimethyl-8-ribityllumazine synthase">
    <location>
        <begin position="1"/>
        <end position="159"/>
    </location>
</feature>
<feature type="active site" description="Proton donor" evidence="1">
    <location>
        <position position="87"/>
    </location>
</feature>
<feature type="binding site" evidence="1">
    <location>
        <position position="26"/>
    </location>
    <ligand>
        <name>5-amino-6-(D-ribitylamino)uracil</name>
        <dbReference type="ChEBI" id="CHEBI:15934"/>
    </ligand>
</feature>
<feature type="binding site" evidence="1">
    <location>
        <begin position="57"/>
        <end position="59"/>
    </location>
    <ligand>
        <name>5-amino-6-(D-ribitylamino)uracil</name>
        <dbReference type="ChEBI" id="CHEBI:15934"/>
    </ligand>
</feature>
<feature type="binding site" evidence="1">
    <location>
        <begin position="79"/>
        <end position="81"/>
    </location>
    <ligand>
        <name>5-amino-6-(D-ribitylamino)uracil</name>
        <dbReference type="ChEBI" id="CHEBI:15934"/>
    </ligand>
</feature>
<feature type="binding site" evidence="1">
    <location>
        <begin position="84"/>
        <end position="85"/>
    </location>
    <ligand>
        <name>(2S)-2-hydroxy-3-oxobutyl phosphate</name>
        <dbReference type="ChEBI" id="CHEBI:58830"/>
    </ligand>
</feature>
<feature type="binding site" evidence="1">
    <location>
        <position position="112"/>
    </location>
    <ligand>
        <name>5-amino-6-(D-ribitylamino)uracil</name>
        <dbReference type="ChEBI" id="CHEBI:15934"/>
    </ligand>
</feature>
<feature type="binding site" evidence="1">
    <location>
        <position position="126"/>
    </location>
    <ligand>
        <name>(2S)-2-hydroxy-3-oxobutyl phosphate</name>
        <dbReference type="ChEBI" id="CHEBI:58830"/>
    </ligand>
</feature>